<organism>
    <name type="scientific">Drosophila melanogaster</name>
    <name type="common">Fruit fly</name>
    <dbReference type="NCBI Taxonomy" id="7227"/>
    <lineage>
        <taxon>Eukaryota</taxon>
        <taxon>Metazoa</taxon>
        <taxon>Ecdysozoa</taxon>
        <taxon>Arthropoda</taxon>
        <taxon>Hexapoda</taxon>
        <taxon>Insecta</taxon>
        <taxon>Pterygota</taxon>
        <taxon>Neoptera</taxon>
        <taxon>Endopterygota</taxon>
        <taxon>Diptera</taxon>
        <taxon>Brachycera</taxon>
        <taxon>Muscomorpha</taxon>
        <taxon>Ephydroidea</taxon>
        <taxon>Drosophilidae</taxon>
        <taxon>Drosophila</taxon>
        <taxon>Sophophora</taxon>
    </lineage>
</organism>
<sequence length="680" mass="73415">MGPTDQDWIGCAVSIACDEVLGVFQGLIKQISAEEITIVRAFRNGVPLRKQNAEVVLKCTDIRSIDLIEPAKQDLDGHTAPPPVVNKPTPVKLPHFSNILGKQQQLQLQQQQQQLQLQQQQKQQFQEQEREQDLPSTPRSRANDNGRVAAGGASSSSGPRGNFNSALSDKMHQLKLIETNGSNGTLRTPQTSRASSAQQQPQISTTPNSVAAFFGNMIPPKVEVKLGSYVSNTRESYCSSSGDSGEATGLSLGSSKPIDIVSNGDGFYKQTAASSYGNTNGNVRRNGNANNNGNGTGNGSYTNGNGNGNGKNKRNRVRRESSMRQQQVQLTFGSEADDPLIHEDFDFEGNLALFDKQAIWDDIESTTQKPDVVRHIVNNHHHKPEQKYRHDENILASKPLQLRQIESMFGGSQDFVTDDGLIIPTIPAYVRNKIEISADKAGLSLQRQIDILARGASDLAITLLGGARRLTPANNHQWPKIAIICDGGKNMRTINIGAATGRQLASHGLTVLLYVEQAKLLEQNSSSPEISLFKATDNVIVHSVDALPTPDLVILSTNTANLSDAIRKWLSVNRASVLAIDPPPCGINEVAIKYSILPILPLNGISTATTSSSSSAAATPTPIASTSAAASATKSAASTNNCGKLYLCNLGIPDKFYRDCGIKYKSPYGHKYVIPIHSKD</sequence>
<protein>
    <recommendedName>
        <fullName>Enhancer of mRNA-decapping protein 3</fullName>
    </recommendedName>
</protein>
<dbReference type="EMBL" id="AE014296">
    <property type="protein sequence ID" value="AAF49329.1"/>
    <property type="molecule type" value="Genomic_DNA"/>
</dbReference>
<dbReference type="EMBL" id="AY069572">
    <property type="protein sequence ID" value="AAL39717.1"/>
    <property type="status" value="ALT_INIT"/>
    <property type="molecule type" value="mRNA"/>
</dbReference>
<dbReference type="EMBL" id="AY060416">
    <property type="protein sequence ID" value="AAL25455.1"/>
    <property type="status" value="ALT_INIT"/>
    <property type="molecule type" value="mRNA"/>
</dbReference>
<dbReference type="RefSeq" id="NP_648992.1">
    <property type="nucleotide sequence ID" value="NM_140735.3"/>
</dbReference>
<dbReference type="PDB" id="2RM4">
    <property type="method" value="NMR"/>
    <property type="chains" value="A=1-101"/>
</dbReference>
<dbReference type="PDBsum" id="2RM4"/>
<dbReference type="BMRB" id="Q9VVI2"/>
<dbReference type="SMR" id="Q9VVI2"/>
<dbReference type="BioGRID" id="65245">
    <property type="interactions" value="7"/>
</dbReference>
<dbReference type="FunCoup" id="Q9VVI2">
    <property type="interactions" value="1378"/>
</dbReference>
<dbReference type="IntAct" id="Q9VVI2">
    <property type="interactions" value="3"/>
</dbReference>
<dbReference type="MINT" id="Q9VVI2"/>
<dbReference type="STRING" id="7227.FBpp0074970"/>
<dbReference type="iPTMnet" id="Q9VVI2"/>
<dbReference type="PaxDb" id="7227-FBpp0074970"/>
<dbReference type="EnsemblMetazoa" id="FBtr0075208">
    <property type="protein sequence ID" value="FBpp0074970"/>
    <property type="gene ID" value="FBgn0036735"/>
</dbReference>
<dbReference type="GeneID" id="39957"/>
<dbReference type="KEGG" id="dme:Dmel_CG6311"/>
<dbReference type="AGR" id="FB:FBgn0036735"/>
<dbReference type="CTD" id="80153"/>
<dbReference type="FlyBase" id="FBgn0036735">
    <property type="gene designation" value="Edc3"/>
</dbReference>
<dbReference type="VEuPathDB" id="VectorBase:FBgn0036735"/>
<dbReference type="eggNOG" id="KOG2585">
    <property type="taxonomic scope" value="Eukaryota"/>
</dbReference>
<dbReference type="GeneTree" id="ENSGT00390000016435"/>
<dbReference type="HOGENOM" id="CLU_026194_0_0_1"/>
<dbReference type="InParanoid" id="Q9VVI2"/>
<dbReference type="OMA" id="NHQWPKI"/>
<dbReference type="OrthoDB" id="10030313at2759"/>
<dbReference type="PhylomeDB" id="Q9VVI2"/>
<dbReference type="Reactome" id="R-DME-430039">
    <property type="pathway name" value="mRNA decay by 5' to 3' exoribonuclease"/>
</dbReference>
<dbReference type="BioGRID-ORCS" id="39957">
    <property type="hits" value="0 hits in 1 CRISPR screen"/>
</dbReference>
<dbReference type="CD-CODE" id="A6E1D014">
    <property type="entry name" value="P-body"/>
</dbReference>
<dbReference type="EvolutionaryTrace" id="Q9VVI2"/>
<dbReference type="GenomeRNAi" id="39957"/>
<dbReference type="PRO" id="PR:Q9VVI2"/>
<dbReference type="Proteomes" id="UP000000803">
    <property type="component" value="Chromosome 3L"/>
</dbReference>
<dbReference type="Bgee" id="FBgn0036735">
    <property type="expression patterns" value="Expressed in distal medullary amacrine neuron Dm11 in insect head and 260 other cell types or tissues"/>
</dbReference>
<dbReference type="ExpressionAtlas" id="Q9VVI2">
    <property type="expression patterns" value="baseline and differential"/>
</dbReference>
<dbReference type="GO" id="GO:0000932">
    <property type="term" value="C:P-body"/>
    <property type="evidence" value="ECO:0000314"/>
    <property type="project" value="UniProtKB"/>
</dbReference>
<dbReference type="GO" id="GO:0003729">
    <property type="term" value="F:mRNA binding"/>
    <property type="evidence" value="ECO:0000318"/>
    <property type="project" value="GO_Central"/>
</dbReference>
<dbReference type="GO" id="GO:0031087">
    <property type="term" value="P:deadenylation-independent decapping of nuclear-transcribed mRNA"/>
    <property type="evidence" value="ECO:0000318"/>
    <property type="project" value="GO_Central"/>
</dbReference>
<dbReference type="GO" id="GO:0006402">
    <property type="term" value="P:mRNA catabolic process"/>
    <property type="evidence" value="ECO:0000315"/>
    <property type="project" value="UniProtKB"/>
</dbReference>
<dbReference type="GO" id="GO:0033962">
    <property type="term" value="P:P-body assembly"/>
    <property type="evidence" value="ECO:0000318"/>
    <property type="project" value="GO_Central"/>
</dbReference>
<dbReference type="CDD" id="cd01737">
    <property type="entry name" value="LSm16_N"/>
    <property type="match status" value="1"/>
</dbReference>
<dbReference type="Gene3D" id="2.30.30.100">
    <property type="match status" value="1"/>
</dbReference>
<dbReference type="Gene3D" id="3.40.50.10260">
    <property type="entry name" value="YjeF N-terminal domain"/>
    <property type="match status" value="1"/>
</dbReference>
<dbReference type="InterPro" id="IPR025762">
    <property type="entry name" value="DFDF"/>
</dbReference>
<dbReference type="InterPro" id="IPR019050">
    <property type="entry name" value="FDF_dom"/>
</dbReference>
<dbReference type="InterPro" id="IPR025609">
    <property type="entry name" value="Lsm14-like_N"/>
</dbReference>
<dbReference type="InterPro" id="IPR034107">
    <property type="entry name" value="Lsm16_N"/>
</dbReference>
<dbReference type="InterPro" id="IPR047575">
    <property type="entry name" value="Sm"/>
</dbReference>
<dbReference type="InterPro" id="IPR004443">
    <property type="entry name" value="YjeF_N_dom"/>
</dbReference>
<dbReference type="InterPro" id="IPR036652">
    <property type="entry name" value="YjeF_N_dom_sf"/>
</dbReference>
<dbReference type="PANTHER" id="PTHR13612">
    <property type="entry name" value="ENHANCER OF MRNA-DECAPPING PROTEIN 3"/>
    <property type="match status" value="1"/>
</dbReference>
<dbReference type="PANTHER" id="PTHR13612:SF0">
    <property type="entry name" value="ENHANCER OF MRNA-DECAPPING PROTEIN 3"/>
    <property type="match status" value="1"/>
</dbReference>
<dbReference type="Pfam" id="PF09532">
    <property type="entry name" value="FDF"/>
    <property type="match status" value="1"/>
</dbReference>
<dbReference type="Pfam" id="PF12701">
    <property type="entry name" value="LSM14"/>
    <property type="match status" value="1"/>
</dbReference>
<dbReference type="SMART" id="SM01199">
    <property type="entry name" value="FDF"/>
    <property type="match status" value="1"/>
</dbReference>
<dbReference type="SMART" id="SM01271">
    <property type="entry name" value="LSM14"/>
    <property type="match status" value="1"/>
</dbReference>
<dbReference type="PROSITE" id="PS51512">
    <property type="entry name" value="DFDF"/>
    <property type="match status" value="1"/>
</dbReference>
<dbReference type="PROSITE" id="PS52002">
    <property type="entry name" value="SM"/>
    <property type="match status" value="1"/>
</dbReference>
<dbReference type="PROSITE" id="PS51385">
    <property type="entry name" value="YJEF_N"/>
    <property type="match status" value="1"/>
</dbReference>
<reference key="1">
    <citation type="journal article" date="2000" name="Science">
        <title>The genome sequence of Drosophila melanogaster.</title>
        <authorList>
            <person name="Adams M.D."/>
            <person name="Celniker S.E."/>
            <person name="Holt R.A."/>
            <person name="Evans C.A."/>
            <person name="Gocayne J.D."/>
            <person name="Amanatides P.G."/>
            <person name="Scherer S.E."/>
            <person name="Li P.W."/>
            <person name="Hoskins R.A."/>
            <person name="Galle R.F."/>
            <person name="George R.A."/>
            <person name="Lewis S.E."/>
            <person name="Richards S."/>
            <person name="Ashburner M."/>
            <person name="Henderson S.N."/>
            <person name="Sutton G.G."/>
            <person name="Wortman J.R."/>
            <person name="Yandell M.D."/>
            <person name="Zhang Q."/>
            <person name="Chen L.X."/>
            <person name="Brandon R.C."/>
            <person name="Rogers Y.-H.C."/>
            <person name="Blazej R.G."/>
            <person name="Champe M."/>
            <person name="Pfeiffer B.D."/>
            <person name="Wan K.H."/>
            <person name="Doyle C."/>
            <person name="Baxter E.G."/>
            <person name="Helt G."/>
            <person name="Nelson C.R."/>
            <person name="Miklos G.L.G."/>
            <person name="Abril J.F."/>
            <person name="Agbayani A."/>
            <person name="An H.-J."/>
            <person name="Andrews-Pfannkoch C."/>
            <person name="Baldwin D."/>
            <person name="Ballew R.M."/>
            <person name="Basu A."/>
            <person name="Baxendale J."/>
            <person name="Bayraktaroglu L."/>
            <person name="Beasley E.M."/>
            <person name="Beeson K.Y."/>
            <person name="Benos P.V."/>
            <person name="Berman B.P."/>
            <person name="Bhandari D."/>
            <person name="Bolshakov S."/>
            <person name="Borkova D."/>
            <person name="Botchan M.R."/>
            <person name="Bouck J."/>
            <person name="Brokstein P."/>
            <person name="Brottier P."/>
            <person name="Burtis K.C."/>
            <person name="Busam D.A."/>
            <person name="Butler H."/>
            <person name="Cadieu E."/>
            <person name="Center A."/>
            <person name="Chandra I."/>
            <person name="Cherry J.M."/>
            <person name="Cawley S."/>
            <person name="Dahlke C."/>
            <person name="Davenport L.B."/>
            <person name="Davies P."/>
            <person name="de Pablos B."/>
            <person name="Delcher A."/>
            <person name="Deng Z."/>
            <person name="Mays A.D."/>
            <person name="Dew I."/>
            <person name="Dietz S.M."/>
            <person name="Dodson K."/>
            <person name="Doup L.E."/>
            <person name="Downes M."/>
            <person name="Dugan-Rocha S."/>
            <person name="Dunkov B.C."/>
            <person name="Dunn P."/>
            <person name="Durbin K.J."/>
            <person name="Evangelista C.C."/>
            <person name="Ferraz C."/>
            <person name="Ferriera S."/>
            <person name="Fleischmann W."/>
            <person name="Fosler C."/>
            <person name="Gabrielian A.E."/>
            <person name="Garg N.S."/>
            <person name="Gelbart W.M."/>
            <person name="Glasser K."/>
            <person name="Glodek A."/>
            <person name="Gong F."/>
            <person name="Gorrell J.H."/>
            <person name="Gu Z."/>
            <person name="Guan P."/>
            <person name="Harris M."/>
            <person name="Harris N.L."/>
            <person name="Harvey D.A."/>
            <person name="Heiman T.J."/>
            <person name="Hernandez J.R."/>
            <person name="Houck J."/>
            <person name="Hostin D."/>
            <person name="Houston K.A."/>
            <person name="Howland T.J."/>
            <person name="Wei M.-H."/>
            <person name="Ibegwam C."/>
            <person name="Jalali M."/>
            <person name="Kalush F."/>
            <person name="Karpen G.H."/>
            <person name="Ke Z."/>
            <person name="Kennison J.A."/>
            <person name="Ketchum K.A."/>
            <person name="Kimmel B.E."/>
            <person name="Kodira C.D."/>
            <person name="Kraft C.L."/>
            <person name="Kravitz S."/>
            <person name="Kulp D."/>
            <person name="Lai Z."/>
            <person name="Lasko P."/>
            <person name="Lei Y."/>
            <person name="Levitsky A.A."/>
            <person name="Li J.H."/>
            <person name="Li Z."/>
            <person name="Liang Y."/>
            <person name="Lin X."/>
            <person name="Liu X."/>
            <person name="Mattei B."/>
            <person name="McIntosh T.C."/>
            <person name="McLeod M.P."/>
            <person name="McPherson D."/>
            <person name="Merkulov G."/>
            <person name="Milshina N.V."/>
            <person name="Mobarry C."/>
            <person name="Morris J."/>
            <person name="Moshrefi A."/>
            <person name="Mount S.M."/>
            <person name="Moy M."/>
            <person name="Murphy B."/>
            <person name="Murphy L."/>
            <person name="Muzny D.M."/>
            <person name="Nelson D.L."/>
            <person name="Nelson D.R."/>
            <person name="Nelson K.A."/>
            <person name="Nixon K."/>
            <person name="Nusskern D.R."/>
            <person name="Pacleb J.M."/>
            <person name="Palazzolo M."/>
            <person name="Pittman G.S."/>
            <person name="Pan S."/>
            <person name="Pollard J."/>
            <person name="Puri V."/>
            <person name="Reese M.G."/>
            <person name="Reinert K."/>
            <person name="Remington K."/>
            <person name="Saunders R.D.C."/>
            <person name="Scheeler F."/>
            <person name="Shen H."/>
            <person name="Shue B.C."/>
            <person name="Siden-Kiamos I."/>
            <person name="Simpson M."/>
            <person name="Skupski M.P."/>
            <person name="Smith T.J."/>
            <person name="Spier E."/>
            <person name="Spradling A.C."/>
            <person name="Stapleton M."/>
            <person name="Strong R."/>
            <person name="Sun E."/>
            <person name="Svirskas R."/>
            <person name="Tector C."/>
            <person name="Turner R."/>
            <person name="Venter E."/>
            <person name="Wang A.H."/>
            <person name="Wang X."/>
            <person name="Wang Z.-Y."/>
            <person name="Wassarman D.A."/>
            <person name="Weinstock G.M."/>
            <person name="Weissenbach J."/>
            <person name="Williams S.M."/>
            <person name="Woodage T."/>
            <person name="Worley K.C."/>
            <person name="Wu D."/>
            <person name="Yang S."/>
            <person name="Yao Q.A."/>
            <person name="Ye J."/>
            <person name="Yeh R.-F."/>
            <person name="Zaveri J.S."/>
            <person name="Zhan M."/>
            <person name="Zhang G."/>
            <person name="Zhao Q."/>
            <person name="Zheng L."/>
            <person name="Zheng X.H."/>
            <person name="Zhong F.N."/>
            <person name="Zhong W."/>
            <person name="Zhou X."/>
            <person name="Zhu S.C."/>
            <person name="Zhu X."/>
            <person name="Smith H.O."/>
            <person name="Gibbs R.A."/>
            <person name="Myers E.W."/>
            <person name="Rubin G.M."/>
            <person name="Venter J.C."/>
        </authorList>
    </citation>
    <scope>NUCLEOTIDE SEQUENCE [LARGE SCALE GENOMIC DNA]</scope>
    <source>
        <strain>Berkeley</strain>
    </source>
</reference>
<reference key="2">
    <citation type="journal article" date="2002" name="Genome Biol.">
        <title>Annotation of the Drosophila melanogaster euchromatic genome: a systematic review.</title>
        <authorList>
            <person name="Misra S."/>
            <person name="Crosby M.A."/>
            <person name="Mungall C.J."/>
            <person name="Matthews B.B."/>
            <person name="Campbell K.S."/>
            <person name="Hradecky P."/>
            <person name="Huang Y."/>
            <person name="Kaminker J.S."/>
            <person name="Millburn G.H."/>
            <person name="Prochnik S.E."/>
            <person name="Smith C.D."/>
            <person name="Tupy J.L."/>
            <person name="Whitfield E.J."/>
            <person name="Bayraktaroglu L."/>
            <person name="Berman B.P."/>
            <person name="Bettencourt B.R."/>
            <person name="Celniker S.E."/>
            <person name="de Grey A.D.N.J."/>
            <person name="Drysdale R.A."/>
            <person name="Harris N.L."/>
            <person name="Richter J."/>
            <person name="Russo S."/>
            <person name="Schroeder A.J."/>
            <person name="Shu S.Q."/>
            <person name="Stapleton M."/>
            <person name="Yamada C."/>
            <person name="Ashburner M."/>
            <person name="Gelbart W.M."/>
            <person name="Rubin G.M."/>
            <person name="Lewis S.E."/>
        </authorList>
    </citation>
    <scope>GENOME REANNOTATION</scope>
    <source>
        <strain>Berkeley</strain>
    </source>
</reference>
<reference key="3">
    <citation type="journal article" date="2002" name="Genome Biol.">
        <title>A Drosophila full-length cDNA resource.</title>
        <authorList>
            <person name="Stapleton M."/>
            <person name="Carlson J.W."/>
            <person name="Brokstein P."/>
            <person name="Yu C."/>
            <person name="Champe M."/>
            <person name="George R.A."/>
            <person name="Guarin H."/>
            <person name="Kronmiller B."/>
            <person name="Pacleb J.M."/>
            <person name="Park S."/>
            <person name="Wan K.H."/>
            <person name="Rubin G.M."/>
            <person name="Celniker S.E."/>
        </authorList>
    </citation>
    <scope>NUCLEOTIDE SEQUENCE [LARGE SCALE MRNA] OF 126-680</scope>
    <source>
        <strain>Berkeley</strain>
        <tissue>Embryo</tissue>
    </source>
</reference>
<reference key="4">
    <citation type="journal article" date="2008" name="J. Proteome Res.">
        <title>Phosphoproteome analysis of Drosophila melanogaster embryos.</title>
        <authorList>
            <person name="Zhai B."/>
            <person name="Villen J."/>
            <person name="Beausoleil S.A."/>
            <person name="Mintseris J."/>
            <person name="Gygi S.P."/>
        </authorList>
    </citation>
    <scope>PHOSPHORYLATION [LARGE SCALE ANALYSIS] AT SER-136 AND THR-188</scope>
    <scope>IDENTIFICATION BY MASS SPECTROMETRY</scope>
    <source>
        <tissue>Embryo</tissue>
    </source>
</reference>
<reference key="5">
    <citation type="journal article" date="2008" name="Mol. Cell. Biol.">
        <title>Similar modes of interaction enable Trailer Hitch and EDC3 to associate with DCP1 and Me31B in distinct protein complexes.</title>
        <authorList>
            <person name="Tritschler F."/>
            <person name="Eulalio A."/>
            <person name="Helms S."/>
            <person name="Schmidt S."/>
            <person name="Coles M."/>
            <person name="Weichenrieder O."/>
            <person name="Izaurralde E."/>
            <person name="Truffault V."/>
        </authorList>
    </citation>
    <scope>INTERACTION WITH DCP1 AND DDX6/ME31B</scope>
</reference>
<reference key="6">
    <citation type="journal article" date="2009" name="Mol. Cell">
        <title>Structural basis for the mutually exclusive anchoring of P body components EDC3 and Tral to the DEAD box protein DDX6/Me31B.</title>
        <authorList>
            <person name="Tritschler F."/>
            <person name="Braun J.E."/>
            <person name="Eulalio A."/>
            <person name="Truffault V."/>
            <person name="Izaurralde E."/>
            <person name="Weichenrieder O."/>
        </authorList>
    </citation>
    <scope>INTERACTION WITH DDX6/ME31B</scope>
    <scope>MUTAGENESIS OF PHE-345 AND PHE-347</scope>
</reference>
<reference key="7">
    <citation type="journal article" date="2019" name="Nucleic Acids Res.">
        <title>Direct role for the Drosophila GIGYF protein in 4EHP-mediated mRNA repression.</title>
        <authorList>
            <person name="Ruscica V."/>
            <person name="Bawankar P."/>
            <person name="Peter D."/>
            <person name="Helms S."/>
            <person name="Igreja C."/>
            <person name="Izaurralde E."/>
        </authorList>
    </citation>
    <scope>INTERACTION WITH GYF</scope>
</reference>
<reference key="8">
    <citation type="journal article" date="2007" name="Mol. Cell. Biol.">
        <title>A divergent Sm fold in EDC3 proteins mediates DCP1 binding and P-body targeting.</title>
        <authorList>
            <person name="Tritschler F."/>
            <person name="Eulalio A."/>
            <person name="Truffault V."/>
            <person name="Hartmann M.D."/>
            <person name="Helms S."/>
            <person name="Schmidt S."/>
            <person name="Coles M."/>
            <person name="Izaurralde E."/>
            <person name="Weichenrieder O."/>
        </authorList>
    </citation>
    <scope>STRUCTURE BY NMR OF 1-101</scope>
    <scope>SUBUNIT</scope>
    <scope>SUBCELLULAR LOCATION</scope>
    <scope>CHARACTERIZATION OF N-TERMINAL DOMAIN</scope>
    <scope>MUTAGENESIS OF GLN-25; PHE-42 AND ASN-44</scope>
    <scope>INTERACTION WITH DCP1A; DCP2 AND ME31B</scope>
</reference>
<evidence type="ECO:0000250" key="1">
    <source>
        <dbReference type="UniProtKB" id="Q96F86"/>
    </source>
</evidence>
<evidence type="ECO:0000255" key="2">
    <source>
        <dbReference type="PROSITE-ProRule" id="PRU00719"/>
    </source>
</evidence>
<evidence type="ECO:0000255" key="3">
    <source>
        <dbReference type="PROSITE-ProRule" id="PRU00845"/>
    </source>
</evidence>
<evidence type="ECO:0000255" key="4">
    <source>
        <dbReference type="PROSITE-ProRule" id="PRU01346"/>
    </source>
</evidence>
<evidence type="ECO:0000256" key="5">
    <source>
        <dbReference type="SAM" id="MobiDB-lite"/>
    </source>
</evidence>
<evidence type="ECO:0000269" key="6">
    <source>
    </source>
</evidence>
<evidence type="ECO:0000269" key="7">
    <source>
    </source>
</evidence>
<evidence type="ECO:0000269" key="8">
    <source>
    </source>
</evidence>
<evidence type="ECO:0000269" key="9">
    <source>
    </source>
</evidence>
<evidence type="ECO:0000269" key="10">
    <source>
    </source>
</evidence>
<evidence type="ECO:0000305" key="11"/>
<evidence type="ECO:0007829" key="12">
    <source>
        <dbReference type="PDB" id="2RM4"/>
    </source>
</evidence>
<proteinExistence type="evidence at protein level"/>
<comment type="function">
    <text>In the process of mRNA degradation, may play a role in mRNA decapping.</text>
</comment>
<comment type="subunit">
    <text evidence="1 6 8 9 10">Forms a complex with DCP1A, DCP2, Me31B/DDX6 and EDC4/HEDLS (By similarity). Within this complex directly interacts with DCP1A, DCP2 and Me31B/DDX6 (PubMed:17923697, PubMed:18765641, PubMed:19285948). Homooligomer (PubMed:17923697). Interacts with Gyf (PubMed:31114929).</text>
</comment>
<comment type="subcellular location">
    <subcellularLocation>
        <location evidence="6">Cytoplasm</location>
        <location evidence="6">P-body</location>
    </subcellularLocation>
    <text>Processing bodies (PB).</text>
</comment>
<comment type="similarity">
    <text evidence="11">Belongs to the EDC3 family.</text>
</comment>
<comment type="sequence caution" evidence="11">
    <conflict type="erroneous initiation">
        <sequence resource="EMBL-CDS" id="AAL25455"/>
    </conflict>
</comment>
<comment type="sequence caution" evidence="11">
    <conflict type="erroneous initiation">
        <sequence resource="EMBL-CDS" id="AAL39717"/>
    </conflict>
</comment>
<keyword id="KW-0002">3D-structure</keyword>
<keyword id="KW-0963">Cytoplasm</keyword>
<keyword id="KW-0597">Phosphoprotein</keyword>
<keyword id="KW-1185">Reference proteome</keyword>
<gene>
    <name type="primary">Edc3</name>
    <name type="ORF">CG6311</name>
</gene>
<feature type="chain" id="PRO_0000330730" description="Enhancer of mRNA-decapping protein 3">
    <location>
        <begin position="1"/>
        <end position="680"/>
    </location>
</feature>
<feature type="domain" description="Sm" evidence="4">
    <location>
        <begin position="1"/>
        <end position="71"/>
    </location>
</feature>
<feature type="domain" description="DFDF" evidence="3">
    <location>
        <begin position="333"/>
        <end position="369"/>
    </location>
</feature>
<feature type="domain" description="YjeF N-terminal" evidence="2">
    <location>
        <begin position="430"/>
        <end position="658"/>
    </location>
</feature>
<feature type="region of interest" description="Required for P-body targeting and interaction with DCP1A" evidence="6">
    <location>
        <begin position="1"/>
        <end position="101"/>
    </location>
</feature>
<feature type="region of interest" description="Disordered" evidence="5">
    <location>
        <begin position="73"/>
        <end position="95"/>
    </location>
</feature>
<feature type="region of interest" description="Required for interaction with DCP2" evidence="6">
    <location>
        <begin position="102"/>
        <end position="338"/>
    </location>
</feature>
<feature type="region of interest" description="Disordered" evidence="5">
    <location>
        <begin position="120"/>
        <end position="166"/>
    </location>
</feature>
<feature type="region of interest" description="Disordered" evidence="5">
    <location>
        <begin position="181"/>
        <end position="205"/>
    </location>
</feature>
<feature type="region of interest" description="Disordered" evidence="5">
    <location>
        <begin position="277"/>
        <end position="325"/>
    </location>
</feature>
<feature type="region of interest" description="Required for interaction with Me31B">
    <location>
        <begin position="331"/>
        <end position="440"/>
    </location>
</feature>
<feature type="compositionally biased region" description="Low complexity" evidence="5">
    <location>
        <begin position="277"/>
        <end position="304"/>
    </location>
</feature>
<feature type="modified residue" description="Phosphoserine" evidence="7">
    <location>
        <position position="136"/>
    </location>
</feature>
<feature type="modified residue" description="Phosphothreonine" evidence="7">
    <location>
        <position position="188"/>
    </location>
</feature>
<feature type="mutagenesis site" description="Strongly reduced interaction with DCP1A. No effect on P-body targeting." evidence="6">
    <original>Q</original>
    <variation>A</variation>
    <location>
        <position position="25"/>
    </location>
</feature>
<feature type="mutagenesis site" description="Strongly reduced interaction with DCP1A, but no effect on P-body targeting; when associated with A-44." evidence="6">
    <original>F</original>
    <variation>A</variation>
    <location>
        <position position="42"/>
    </location>
</feature>
<feature type="mutagenesis site" description="Strongly reduced interaction with DCP1A, but no effect on P-body targeting; when associated with A-42." evidence="6">
    <original>N</original>
    <variation>A</variation>
    <location>
        <position position="44"/>
    </location>
</feature>
<feature type="mutagenesis site" description="Strongly reduced interaction with DDX6." evidence="9">
    <original>F</original>
    <variation>A</variation>
    <location>
        <position position="345"/>
    </location>
</feature>
<feature type="mutagenesis site" description="Minor effect on interaction with DDX6." evidence="9">
    <original>F</original>
    <variation>A</variation>
    <location>
        <position position="347"/>
    </location>
</feature>
<feature type="helix" evidence="12">
    <location>
        <begin position="6"/>
        <end position="8"/>
    </location>
</feature>
<feature type="strand" evidence="12">
    <location>
        <begin position="12"/>
        <end position="17"/>
    </location>
</feature>
<feature type="turn" evidence="12">
    <location>
        <begin position="19"/>
        <end position="21"/>
    </location>
</feature>
<feature type="strand" evidence="12">
    <location>
        <begin position="23"/>
        <end position="32"/>
    </location>
</feature>
<feature type="strand" evidence="12">
    <location>
        <begin position="35"/>
        <end position="43"/>
    </location>
</feature>
<feature type="strand" evidence="12">
    <location>
        <begin position="51"/>
        <end position="53"/>
    </location>
</feature>
<feature type="strand" evidence="12">
    <location>
        <begin position="55"/>
        <end position="58"/>
    </location>
</feature>
<feature type="turn" evidence="12">
    <location>
        <begin position="59"/>
        <end position="61"/>
    </location>
</feature>
<feature type="strand" evidence="12">
    <location>
        <begin position="62"/>
        <end position="69"/>
    </location>
</feature>
<accession>Q9VVI2</accession>
<accession>Q8T042</accession>
<accession>Q95SZ2</accession>
<name>EDC3_DROME</name>